<evidence type="ECO:0000250" key="1"/>
<evidence type="ECO:0000255" key="2"/>
<evidence type="ECO:0000255" key="3">
    <source>
        <dbReference type="PROSITE-ProRule" id="PRU00703"/>
    </source>
</evidence>
<evidence type="ECO:0000255" key="4">
    <source>
        <dbReference type="PROSITE-ProRule" id="PRU00797"/>
    </source>
</evidence>
<evidence type="ECO:0000305" key="5"/>
<gene>
    <name type="primary">gutQ</name>
    <name type="ordered locus">c3262</name>
</gene>
<sequence>MSEALLNAGRQTLMLELQEASHLPERLGDDFVRAANIILHCEGKVVVSGIGKSGHIGKKIAATLASTGTPAFFVHPAEALHGDLGMIESRDVMLFISYSGGAKELDLIIPRLEDKSIALLAMTGKPTSPLGLAAKAVLDISVEREACPMHLAPTSSTVNTLMMGDALAMAVMQARGFNEEDFARSHPAGALGARLLNKVHHLMRRDDAIPQVALTASVMDAMLELSRTGLGLVAVCDDQRLVKGVFTDGDLRRWLVGGGALTTPVNEAMTVGGTTLQSQSRAIDAKEILMKRKITAAPVVDENGKLTGAINLQDFYQAGII</sequence>
<comment type="function">
    <text evidence="1">Catalyzes the reversible aldol-ketol isomerization between D-ribulose 5-phosphate (Ru5P) and D-arabinose 5-phosphate (A5P). It is also able of sustaining the biosynthetic pathway of 3-deoxy-D-manno-octulosonate (KDO), a unique 8-carbon sugar component of lipopolysaccharides (LPSs) (By similarity).</text>
</comment>
<comment type="catalytic activity">
    <reaction>
        <text>D-arabinose 5-phosphate = D-ribulose 5-phosphate</text>
        <dbReference type="Rhea" id="RHEA:23104"/>
        <dbReference type="ChEBI" id="CHEBI:57693"/>
        <dbReference type="ChEBI" id="CHEBI:58121"/>
        <dbReference type="EC" id="5.3.1.13"/>
    </reaction>
</comment>
<comment type="subunit">
    <text evidence="1">Homotetramer.</text>
</comment>
<comment type="similarity">
    <text evidence="5">Belongs to the SIS family. GutQ/KpsF subfamily.</text>
</comment>
<feature type="chain" id="PRO_0000410938" description="Arabinose 5-phosphate isomerase GutQ">
    <location>
        <begin position="1"/>
        <end position="321"/>
    </location>
</feature>
<feature type="domain" description="SIS" evidence="4">
    <location>
        <begin position="34"/>
        <end position="177"/>
    </location>
</feature>
<feature type="domain" description="CBS 1" evidence="3">
    <location>
        <begin position="203"/>
        <end position="261"/>
    </location>
</feature>
<feature type="domain" description="CBS 2" evidence="3">
    <location>
        <begin position="269"/>
        <end position="321"/>
    </location>
</feature>
<feature type="binding site" evidence="2">
    <location>
        <begin position="49"/>
        <end position="54"/>
    </location>
    <ligand>
        <name>ATP</name>
        <dbReference type="ChEBI" id="CHEBI:30616"/>
    </ligand>
</feature>
<feature type="binding site" evidence="1">
    <location>
        <begin position="68"/>
        <end position="69"/>
    </location>
    <ligand>
        <name>substrate</name>
    </ligand>
</feature>
<feature type="binding site" evidence="1">
    <location>
        <position position="75"/>
    </location>
    <ligand>
        <name>substrate</name>
    </ligand>
</feature>
<feature type="binding site" evidence="1">
    <location>
        <position position="75"/>
    </location>
    <ligand>
        <name>Zn(2+)</name>
        <dbReference type="ChEBI" id="CHEBI:29105"/>
    </ligand>
</feature>
<feature type="binding site" evidence="1">
    <location>
        <position position="81"/>
    </location>
    <ligand>
        <name>substrate</name>
    </ligand>
</feature>
<feature type="binding site" evidence="1">
    <location>
        <begin position="107"/>
        <end position="116"/>
    </location>
    <ligand>
        <name>substrate</name>
    </ligand>
</feature>
<feature type="binding site" evidence="1">
    <location>
        <begin position="141"/>
        <end position="143"/>
    </location>
    <ligand>
        <name>substrate</name>
    </ligand>
</feature>
<feature type="binding site" evidence="1">
    <location>
        <position position="215"/>
    </location>
    <ligand>
        <name>substrate</name>
    </ligand>
</feature>
<feature type="binding site" evidence="1">
    <location>
        <position position="267"/>
    </location>
    <ligand>
        <name>substrate</name>
    </ligand>
</feature>
<feature type="site" description="Catalytically relevant" evidence="1">
    <location>
        <position position="52"/>
    </location>
</feature>
<feature type="site" description="Catalytically relevant" evidence="1">
    <location>
        <position position="104"/>
    </location>
</feature>
<feature type="site" description="Catalytically relevant" evidence="1">
    <location>
        <position position="145"/>
    </location>
</feature>
<feature type="site" description="Catalytically relevant" evidence="1">
    <location>
        <position position="186"/>
    </location>
</feature>
<organism>
    <name type="scientific">Escherichia coli O6:H1 (strain CFT073 / ATCC 700928 / UPEC)</name>
    <dbReference type="NCBI Taxonomy" id="199310"/>
    <lineage>
        <taxon>Bacteria</taxon>
        <taxon>Pseudomonadati</taxon>
        <taxon>Pseudomonadota</taxon>
        <taxon>Gammaproteobacteria</taxon>
        <taxon>Enterobacterales</taxon>
        <taxon>Enterobacteriaceae</taxon>
        <taxon>Escherichia</taxon>
    </lineage>
</organism>
<proteinExistence type="inferred from homology"/>
<reference key="1">
    <citation type="journal article" date="2002" name="Proc. Natl. Acad. Sci. U.S.A.">
        <title>Extensive mosaic structure revealed by the complete genome sequence of uropathogenic Escherichia coli.</title>
        <authorList>
            <person name="Welch R.A."/>
            <person name="Burland V."/>
            <person name="Plunkett G. III"/>
            <person name="Redford P."/>
            <person name="Roesch P."/>
            <person name="Rasko D."/>
            <person name="Buckles E.L."/>
            <person name="Liou S.-R."/>
            <person name="Boutin A."/>
            <person name="Hackett J."/>
            <person name="Stroud D."/>
            <person name="Mayhew G.F."/>
            <person name="Rose D.J."/>
            <person name="Zhou S."/>
            <person name="Schwartz D.C."/>
            <person name="Perna N.T."/>
            <person name="Mobley H.L.T."/>
            <person name="Donnenberg M.S."/>
            <person name="Blattner F.R."/>
        </authorList>
    </citation>
    <scope>NUCLEOTIDE SEQUENCE [LARGE SCALE GENOMIC DNA]</scope>
    <source>
        <strain>CFT073 / ATCC 700928 / UPEC</strain>
    </source>
</reference>
<dbReference type="EC" id="5.3.1.13"/>
<dbReference type="EMBL" id="AE014075">
    <property type="protein sequence ID" value="AAN81713.1"/>
    <property type="molecule type" value="Genomic_DNA"/>
</dbReference>
<dbReference type="RefSeq" id="WP_001287404.1">
    <property type="nucleotide sequence ID" value="NZ_CP051263.1"/>
</dbReference>
<dbReference type="SMR" id="Q8FEN7"/>
<dbReference type="STRING" id="199310.c3262"/>
<dbReference type="KEGG" id="ecc:c3262"/>
<dbReference type="eggNOG" id="COG0517">
    <property type="taxonomic scope" value="Bacteria"/>
</dbReference>
<dbReference type="eggNOG" id="COG0794">
    <property type="taxonomic scope" value="Bacteria"/>
</dbReference>
<dbReference type="HOGENOM" id="CLU_040681_13_1_6"/>
<dbReference type="BioCyc" id="ECOL199310:C3262-MONOMER"/>
<dbReference type="Proteomes" id="UP000001410">
    <property type="component" value="Chromosome"/>
</dbReference>
<dbReference type="GO" id="GO:0019146">
    <property type="term" value="F:arabinose-5-phosphate isomerase activity"/>
    <property type="evidence" value="ECO:0007669"/>
    <property type="project" value="UniProtKB-EC"/>
</dbReference>
<dbReference type="GO" id="GO:0005524">
    <property type="term" value="F:ATP binding"/>
    <property type="evidence" value="ECO:0007669"/>
    <property type="project" value="UniProtKB-KW"/>
</dbReference>
<dbReference type="GO" id="GO:0046872">
    <property type="term" value="F:metal ion binding"/>
    <property type="evidence" value="ECO:0007669"/>
    <property type="project" value="UniProtKB-KW"/>
</dbReference>
<dbReference type="GO" id="GO:0019294">
    <property type="term" value="P:keto-3-deoxy-D-manno-octulosonic acid biosynthetic process"/>
    <property type="evidence" value="ECO:0000250"/>
    <property type="project" value="UniProtKB"/>
</dbReference>
<dbReference type="CDD" id="cd04604">
    <property type="entry name" value="CBS_pair_SIS_assoc"/>
    <property type="match status" value="1"/>
</dbReference>
<dbReference type="CDD" id="cd05014">
    <property type="entry name" value="SIS_Kpsf"/>
    <property type="match status" value="1"/>
</dbReference>
<dbReference type="FunFam" id="3.40.50.10490:FF:000011">
    <property type="entry name" value="Arabinose 5-phosphate isomerase"/>
    <property type="match status" value="1"/>
</dbReference>
<dbReference type="Gene3D" id="3.10.580.10">
    <property type="entry name" value="CBS-domain"/>
    <property type="match status" value="1"/>
</dbReference>
<dbReference type="Gene3D" id="3.40.50.10490">
    <property type="entry name" value="Glucose-6-phosphate isomerase like protein, domain 1"/>
    <property type="match status" value="1"/>
</dbReference>
<dbReference type="InterPro" id="IPR000644">
    <property type="entry name" value="CBS_dom"/>
</dbReference>
<dbReference type="InterPro" id="IPR046342">
    <property type="entry name" value="CBS_dom_sf"/>
</dbReference>
<dbReference type="InterPro" id="IPR050986">
    <property type="entry name" value="GutQ/KpsF_isomerases"/>
</dbReference>
<dbReference type="InterPro" id="IPR004800">
    <property type="entry name" value="KdsD/KpsF-type"/>
</dbReference>
<dbReference type="InterPro" id="IPR001347">
    <property type="entry name" value="SIS_dom"/>
</dbReference>
<dbReference type="InterPro" id="IPR046348">
    <property type="entry name" value="SIS_dom_sf"/>
</dbReference>
<dbReference type="InterPro" id="IPR035474">
    <property type="entry name" value="SIS_Kpsf"/>
</dbReference>
<dbReference type="NCBIfam" id="TIGR00393">
    <property type="entry name" value="kpsF"/>
    <property type="match status" value="1"/>
</dbReference>
<dbReference type="NCBIfam" id="NF008581">
    <property type="entry name" value="PRK11543.1"/>
    <property type="match status" value="1"/>
</dbReference>
<dbReference type="PANTHER" id="PTHR42745">
    <property type="match status" value="1"/>
</dbReference>
<dbReference type="PANTHER" id="PTHR42745:SF2">
    <property type="entry name" value="ARABINOSE 5-PHOSPHATE ISOMERASE GUTQ"/>
    <property type="match status" value="1"/>
</dbReference>
<dbReference type="Pfam" id="PF00571">
    <property type="entry name" value="CBS"/>
    <property type="match status" value="2"/>
</dbReference>
<dbReference type="Pfam" id="PF01380">
    <property type="entry name" value="SIS"/>
    <property type="match status" value="1"/>
</dbReference>
<dbReference type="PIRSF" id="PIRSF004692">
    <property type="entry name" value="KdsD_KpsF"/>
    <property type="match status" value="1"/>
</dbReference>
<dbReference type="SUPFAM" id="SSF54631">
    <property type="entry name" value="CBS-domain pair"/>
    <property type="match status" value="1"/>
</dbReference>
<dbReference type="SUPFAM" id="SSF53697">
    <property type="entry name" value="SIS domain"/>
    <property type="match status" value="1"/>
</dbReference>
<dbReference type="PROSITE" id="PS51371">
    <property type="entry name" value="CBS"/>
    <property type="match status" value="2"/>
</dbReference>
<dbReference type="PROSITE" id="PS51464">
    <property type="entry name" value="SIS"/>
    <property type="match status" value="1"/>
</dbReference>
<name>GUTQ_ECOL6</name>
<protein>
    <recommendedName>
        <fullName>Arabinose 5-phosphate isomerase GutQ</fullName>
        <shortName>API</shortName>
        <shortName>G-API</shortName>
        <ecNumber>5.3.1.13</ecNumber>
    </recommendedName>
    <alternativeName>
        <fullName>Phosphosugar aldol-ketol isomerase</fullName>
    </alternativeName>
</protein>
<accession>Q8FEN7</accession>
<keyword id="KW-0067">ATP-binding</keyword>
<keyword id="KW-0129">CBS domain</keyword>
<keyword id="KW-0413">Isomerase</keyword>
<keyword id="KW-0448">Lipopolysaccharide biosynthesis</keyword>
<keyword id="KW-0479">Metal-binding</keyword>
<keyword id="KW-0547">Nucleotide-binding</keyword>
<keyword id="KW-1185">Reference proteome</keyword>
<keyword id="KW-0677">Repeat</keyword>
<keyword id="KW-0862">Zinc</keyword>